<reference key="1">
    <citation type="journal article" date="2004" name="PLoS Biol.">
        <title>Genomic insights into methanotrophy: the complete genome sequence of Methylococcus capsulatus (Bath).</title>
        <authorList>
            <person name="Ward N.L."/>
            <person name="Larsen O."/>
            <person name="Sakwa J."/>
            <person name="Bruseth L."/>
            <person name="Khouri H.M."/>
            <person name="Durkin A.S."/>
            <person name="Dimitrov G."/>
            <person name="Jiang L."/>
            <person name="Scanlan D."/>
            <person name="Kang K.H."/>
            <person name="Lewis M.R."/>
            <person name="Nelson K.E."/>
            <person name="Methe B.A."/>
            <person name="Wu M."/>
            <person name="Heidelberg J.F."/>
            <person name="Paulsen I.T."/>
            <person name="Fouts D.E."/>
            <person name="Ravel J."/>
            <person name="Tettelin H."/>
            <person name="Ren Q."/>
            <person name="Read T.D."/>
            <person name="DeBoy R.T."/>
            <person name="Seshadri R."/>
            <person name="Salzberg S.L."/>
            <person name="Jensen H.B."/>
            <person name="Birkeland N.K."/>
            <person name="Nelson W.C."/>
            <person name="Dodson R.J."/>
            <person name="Grindhaug S.H."/>
            <person name="Holt I.E."/>
            <person name="Eidhammer I."/>
            <person name="Jonasen I."/>
            <person name="Vanaken S."/>
            <person name="Utterback T.R."/>
            <person name="Feldblyum T.V."/>
            <person name="Fraser C.M."/>
            <person name="Lillehaug J.R."/>
            <person name="Eisen J.A."/>
        </authorList>
    </citation>
    <scope>NUCLEOTIDE SEQUENCE [LARGE SCALE GENOMIC DNA]</scope>
    <source>
        <strain>ATCC 33009 / NCIMB 11132 / Bath</strain>
    </source>
</reference>
<evidence type="ECO:0000255" key="1">
    <source>
        <dbReference type="HAMAP-Rule" id="MF_01537"/>
    </source>
</evidence>
<proteinExistence type="inferred from homology"/>
<name>PPNP_METCA</name>
<sequence>MSQFDNVSVIKQANVYFGGKCISHTVQFPDGSRKTLGVILPSTLHFETGAPEVMEIVAGGCRVQLAGQTGWQSYQAGDSFSIPGNSGFQIEVSDTLHYVCHFG</sequence>
<gene>
    <name evidence="1" type="primary">ppnP</name>
    <name type="ordered locus">MCA1207</name>
</gene>
<accession>Q609M6</accession>
<feature type="chain" id="PRO_0000211770" description="Pyrimidine/purine nucleoside phosphorylase">
    <location>
        <begin position="1"/>
        <end position="103"/>
    </location>
</feature>
<comment type="function">
    <text evidence="1">Catalyzes the phosphorolysis of diverse nucleosides, yielding D-ribose 1-phosphate and the respective free bases. Can use uridine, adenosine, guanosine, cytidine, thymidine, inosine and xanthosine as substrates. Also catalyzes the reverse reactions.</text>
</comment>
<comment type="catalytic activity">
    <reaction evidence="1">
        <text>a purine D-ribonucleoside + phosphate = a purine nucleobase + alpha-D-ribose 1-phosphate</text>
        <dbReference type="Rhea" id="RHEA:19805"/>
        <dbReference type="ChEBI" id="CHEBI:26386"/>
        <dbReference type="ChEBI" id="CHEBI:43474"/>
        <dbReference type="ChEBI" id="CHEBI:57720"/>
        <dbReference type="ChEBI" id="CHEBI:142355"/>
        <dbReference type="EC" id="2.4.2.1"/>
    </reaction>
</comment>
<comment type="catalytic activity">
    <reaction evidence="1">
        <text>adenosine + phosphate = alpha-D-ribose 1-phosphate + adenine</text>
        <dbReference type="Rhea" id="RHEA:27642"/>
        <dbReference type="ChEBI" id="CHEBI:16335"/>
        <dbReference type="ChEBI" id="CHEBI:16708"/>
        <dbReference type="ChEBI" id="CHEBI:43474"/>
        <dbReference type="ChEBI" id="CHEBI:57720"/>
        <dbReference type="EC" id="2.4.2.1"/>
    </reaction>
</comment>
<comment type="catalytic activity">
    <reaction evidence="1">
        <text>cytidine + phosphate = cytosine + alpha-D-ribose 1-phosphate</text>
        <dbReference type="Rhea" id="RHEA:52540"/>
        <dbReference type="ChEBI" id="CHEBI:16040"/>
        <dbReference type="ChEBI" id="CHEBI:17562"/>
        <dbReference type="ChEBI" id="CHEBI:43474"/>
        <dbReference type="ChEBI" id="CHEBI:57720"/>
        <dbReference type="EC" id="2.4.2.2"/>
    </reaction>
</comment>
<comment type="catalytic activity">
    <reaction evidence="1">
        <text>guanosine + phosphate = alpha-D-ribose 1-phosphate + guanine</text>
        <dbReference type="Rhea" id="RHEA:13233"/>
        <dbReference type="ChEBI" id="CHEBI:16235"/>
        <dbReference type="ChEBI" id="CHEBI:16750"/>
        <dbReference type="ChEBI" id="CHEBI:43474"/>
        <dbReference type="ChEBI" id="CHEBI:57720"/>
        <dbReference type="EC" id="2.4.2.1"/>
    </reaction>
</comment>
<comment type="catalytic activity">
    <reaction evidence="1">
        <text>inosine + phosphate = alpha-D-ribose 1-phosphate + hypoxanthine</text>
        <dbReference type="Rhea" id="RHEA:27646"/>
        <dbReference type="ChEBI" id="CHEBI:17368"/>
        <dbReference type="ChEBI" id="CHEBI:17596"/>
        <dbReference type="ChEBI" id="CHEBI:43474"/>
        <dbReference type="ChEBI" id="CHEBI:57720"/>
        <dbReference type="EC" id="2.4.2.1"/>
    </reaction>
</comment>
<comment type="catalytic activity">
    <reaction evidence="1">
        <text>thymidine + phosphate = 2-deoxy-alpha-D-ribose 1-phosphate + thymine</text>
        <dbReference type="Rhea" id="RHEA:16037"/>
        <dbReference type="ChEBI" id="CHEBI:17748"/>
        <dbReference type="ChEBI" id="CHEBI:17821"/>
        <dbReference type="ChEBI" id="CHEBI:43474"/>
        <dbReference type="ChEBI" id="CHEBI:57259"/>
        <dbReference type="EC" id="2.4.2.2"/>
    </reaction>
</comment>
<comment type="catalytic activity">
    <reaction evidence="1">
        <text>uridine + phosphate = alpha-D-ribose 1-phosphate + uracil</text>
        <dbReference type="Rhea" id="RHEA:24388"/>
        <dbReference type="ChEBI" id="CHEBI:16704"/>
        <dbReference type="ChEBI" id="CHEBI:17568"/>
        <dbReference type="ChEBI" id="CHEBI:43474"/>
        <dbReference type="ChEBI" id="CHEBI:57720"/>
        <dbReference type="EC" id="2.4.2.2"/>
    </reaction>
</comment>
<comment type="catalytic activity">
    <reaction evidence="1">
        <text>xanthosine + phosphate = alpha-D-ribose 1-phosphate + xanthine</text>
        <dbReference type="Rhea" id="RHEA:27638"/>
        <dbReference type="ChEBI" id="CHEBI:17712"/>
        <dbReference type="ChEBI" id="CHEBI:18107"/>
        <dbReference type="ChEBI" id="CHEBI:43474"/>
        <dbReference type="ChEBI" id="CHEBI:57720"/>
        <dbReference type="EC" id="2.4.2.1"/>
    </reaction>
</comment>
<comment type="similarity">
    <text evidence="1">Belongs to the nucleoside phosphorylase PpnP family.</text>
</comment>
<keyword id="KW-0328">Glycosyltransferase</keyword>
<keyword id="KW-1185">Reference proteome</keyword>
<keyword id="KW-0808">Transferase</keyword>
<organism>
    <name type="scientific">Methylococcus capsulatus (strain ATCC 33009 / NCIMB 11132 / Bath)</name>
    <dbReference type="NCBI Taxonomy" id="243233"/>
    <lineage>
        <taxon>Bacteria</taxon>
        <taxon>Pseudomonadati</taxon>
        <taxon>Pseudomonadota</taxon>
        <taxon>Gammaproteobacteria</taxon>
        <taxon>Methylococcales</taxon>
        <taxon>Methylococcaceae</taxon>
        <taxon>Methylococcus</taxon>
    </lineage>
</organism>
<dbReference type="EC" id="2.4.2.1" evidence="1"/>
<dbReference type="EC" id="2.4.2.2" evidence="1"/>
<dbReference type="EMBL" id="AE017282">
    <property type="protein sequence ID" value="AAU92709.1"/>
    <property type="molecule type" value="Genomic_DNA"/>
</dbReference>
<dbReference type="RefSeq" id="WP_010960493.1">
    <property type="nucleotide sequence ID" value="NC_002977.6"/>
</dbReference>
<dbReference type="SMR" id="Q609M6"/>
<dbReference type="STRING" id="243233.MCA1207"/>
<dbReference type="GeneID" id="88223494"/>
<dbReference type="KEGG" id="mca:MCA1207"/>
<dbReference type="eggNOG" id="COG3123">
    <property type="taxonomic scope" value="Bacteria"/>
</dbReference>
<dbReference type="HOGENOM" id="CLU_157874_1_0_6"/>
<dbReference type="Proteomes" id="UP000006821">
    <property type="component" value="Chromosome"/>
</dbReference>
<dbReference type="GO" id="GO:0005829">
    <property type="term" value="C:cytosol"/>
    <property type="evidence" value="ECO:0007669"/>
    <property type="project" value="TreeGrafter"/>
</dbReference>
<dbReference type="GO" id="GO:0047975">
    <property type="term" value="F:guanosine phosphorylase activity"/>
    <property type="evidence" value="ECO:0007669"/>
    <property type="project" value="UniProtKB-EC"/>
</dbReference>
<dbReference type="GO" id="GO:0004731">
    <property type="term" value="F:purine-nucleoside phosphorylase activity"/>
    <property type="evidence" value="ECO:0007669"/>
    <property type="project" value="UniProtKB-UniRule"/>
</dbReference>
<dbReference type="GO" id="GO:0009032">
    <property type="term" value="F:thymidine phosphorylase activity"/>
    <property type="evidence" value="ECO:0007669"/>
    <property type="project" value="UniProtKB-EC"/>
</dbReference>
<dbReference type="GO" id="GO:0004850">
    <property type="term" value="F:uridine phosphorylase activity"/>
    <property type="evidence" value="ECO:0007669"/>
    <property type="project" value="UniProtKB-EC"/>
</dbReference>
<dbReference type="CDD" id="cd20296">
    <property type="entry name" value="cupin_PpnP-like"/>
    <property type="match status" value="1"/>
</dbReference>
<dbReference type="Gene3D" id="2.60.120.10">
    <property type="entry name" value="Jelly Rolls"/>
    <property type="match status" value="1"/>
</dbReference>
<dbReference type="HAMAP" id="MF_01537">
    <property type="entry name" value="Nucleos_phosphorylase_PpnP"/>
    <property type="match status" value="1"/>
</dbReference>
<dbReference type="InterPro" id="IPR009664">
    <property type="entry name" value="Ppnp"/>
</dbReference>
<dbReference type="InterPro" id="IPR014710">
    <property type="entry name" value="RmlC-like_jellyroll"/>
</dbReference>
<dbReference type="InterPro" id="IPR011051">
    <property type="entry name" value="RmlC_Cupin_sf"/>
</dbReference>
<dbReference type="PANTHER" id="PTHR36540">
    <property type="entry name" value="PYRIMIDINE/PURINE NUCLEOSIDE PHOSPHORYLASE"/>
    <property type="match status" value="1"/>
</dbReference>
<dbReference type="PANTHER" id="PTHR36540:SF1">
    <property type="entry name" value="PYRIMIDINE_PURINE NUCLEOSIDE PHOSPHORYLASE"/>
    <property type="match status" value="1"/>
</dbReference>
<dbReference type="Pfam" id="PF06865">
    <property type="entry name" value="Ppnp"/>
    <property type="match status" value="1"/>
</dbReference>
<dbReference type="SUPFAM" id="SSF51182">
    <property type="entry name" value="RmlC-like cupins"/>
    <property type="match status" value="1"/>
</dbReference>
<protein>
    <recommendedName>
        <fullName evidence="1">Pyrimidine/purine nucleoside phosphorylase</fullName>
        <ecNumber evidence="1">2.4.2.1</ecNumber>
        <ecNumber evidence="1">2.4.2.2</ecNumber>
    </recommendedName>
    <alternativeName>
        <fullName evidence="1">Adenosine phosphorylase</fullName>
    </alternativeName>
    <alternativeName>
        <fullName evidence="1">Cytidine phosphorylase</fullName>
    </alternativeName>
    <alternativeName>
        <fullName evidence="1">Guanosine phosphorylase</fullName>
    </alternativeName>
    <alternativeName>
        <fullName evidence="1">Inosine phosphorylase</fullName>
    </alternativeName>
    <alternativeName>
        <fullName evidence="1">Thymidine phosphorylase</fullName>
    </alternativeName>
    <alternativeName>
        <fullName evidence="1">Uridine phosphorylase</fullName>
    </alternativeName>
    <alternativeName>
        <fullName evidence="1">Xanthosine phosphorylase</fullName>
    </alternativeName>
</protein>